<comment type="function">
    <text evidence="1">Involved in coproporphyrin-dependent heme b biosynthesis. Catalyzes the insertion of ferrous iron into coproporphyrin III to form Fe-coproporphyrin III.</text>
</comment>
<comment type="catalytic activity">
    <reaction evidence="1">
        <text>Fe-coproporphyrin III + 2 H(+) = coproporphyrin III + Fe(2+)</text>
        <dbReference type="Rhea" id="RHEA:49572"/>
        <dbReference type="ChEBI" id="CHEBI:15378"/>
        <dbReference type="ChEBI" id="CHEBI:29033"/>
        <dbReference type="ChEBI" id="CHEBI:68438"/>
        <dbReference type="ChEBI" id="CHEBI:131725"/>
        <dbReference type="EC" id="4.99.1.9"/>
    </reaction>
    <physiologicalReaction direction="right-to-left" evidence="1">
        <dbReference type="Rhea" id="RHEA:49574"/>
    </physiologicalReaction>
</comment>
<comment type="pathway">
    <text evidence="1">Porphyrin-containing compound metabolism; protoheme biosynthesis.</text>
</comment>
<comment type="subcellular location">
    <subcellularLocation>
        <location evidence="1">Cytoplasm</location>
    </subcellularLocation>
</comment>
<comment type="similarity">
    <text evidence="1">Belongs to the ferrochelatase family.</text>
</comment>
<protein>
    <recommendedName>
        <fullName evidence="1">Coproporphyrin III ferrochelatase</fullName>
        <ecNumber evidence="1">4.99.1.9</ecNumber>
    </recommendedName>
</protein>
<feature type="chain" id="PRO_1000019324" description="Coproporphyrin III ferrochelatase">
    <location>
        <begin position="1"/>
        <end position="346"/>
    </location>
</feature>
<feature type="binding site" evidence="1">
    <location>
        <position position="52"/>
    </location>
    <ligand>
        <name>Fe-coproporphyrin III</name>
        <dbReference type="ChEBI" id="CHEBI:68438"/>
    </ligand>
</feature>
<feature type="binding site" evidence="1">
    <location>
        <position position="121"/>
    </location>
    <ligand>
        <name>Fe-coproporphyrin III</name>
        <dbReference type="ChEBI" id="CHEBI:68438"/>
    </ligand>
</feature>
<feature type="binding site" evidence="1">
    <location>
        <position position="181"/>
    </location>
    <ligand>
        <name>Fe(2+)</name>
        <dbReference type="ChEBI" id="CHEBI:29033"/>
    </ligand>
</feature>
<feature type="binding site" evidence="1">
    <location>
        <position position="264"/>
    </location>
    <ligand>
        <name>Fe(2+)</name>
        <dbReference type="ChEBI" id="CHEBI:29033"/>
    </ligand>
</feature>
<proteinExistence type="inferred from homology"/>
<gene>
    <name evidence="1" type="primary">cpfC</name>
    <name type="ordered locus">Mmcs_2458</name>
</gene>
<reference key="1">
    <citation type="submission" date="2006-06" db="EMBL/GenBank/DDBJ databases">
        <title>Complete sequence of chromosome of Mycobacterium sp. MCS.</title>
        <authorList>
            <consortium name="US DOE Joint Genome Institute"/>
            <person name="Copeland A."/>
            <person name="Lucas S."/>
            <person name="Lapidus A."/>
            <person name="Barry K."/>
            <person name="Detter J.C."/>
            <person name="Glavina del Rio T."/>
            <person name="Hammon N."/>
            <person name="Israni S."/>
            <person name="Dalin E."/>
            <person name="Tice H."/>
            <person name="Pitluck S."/>
            <person name="Martinez M."/>
            <person name="Schmutz J."/>
            <person name="Larimer F."/>
            <person name="Land M."/>
            <person name="Hauser L."/>
            <person name="Kyrpides N."/>
            <person name="Kim E."/>
            <person name="Miller C.D."/>
            <person name="Hughes J.E."/>
            <person name="Anderson A.J."/>
            <person name="Sims R.C."/>
            <person name="Richardson P."/>
        </authorList>
    </citation>
    <scope>NUCLEOTIDE SEQUENCE [LARGE SCALE GENOMIC DNA]</scope>
    <source>
        <strain>MCS</strain>
    </source>
</reference>
<organism>
    <name type="scientific">Mycobacterium sp. (strain MCS)</name>
    <dbReference type="NCBI Taxonomy" id="164756"/>
    <lineage>
        <taxon>Bacteria</taxon>
        <taxon>Bacillati</taxon>
        <taxon>Actinomycetota</taxon>
        <taxon>Actinomycetes</taxon>
        <taxon>Mycobacteriales</taxon>
        <taxon>Mycobacteriaceae</taxon>
        <taxon>Mycobacterium</taxon>
    </lineage>
</organism>
<sequence length="346" mass="37567">MLFDALLVLSFGGPEGPDQVMPFLENVTRGRGIPRERLASVAEHYLHFGGVSPINGINRALIAEIEAELGDRGETLPVYFGNRNWDPYVEDAVTAMRDDGVRRAAVFATSAWGGYSSCTQYNEDIARGRAAAGDGAPQLVKLRHYFDHPLLVEMFAESISVAAQSLPADVRDEARLVFTAHSIPVAADDRHGPNLYSRQVAYATRLVAAAAGYSEFDQVWQSRSGPPRIPWLEPDIGDHVTALAERGTKAVIICPIGFVADHIEVVWDLDSEVREQAADLGIAMARARTPNADRRYARLALDLVDELRGDRDPLRVAGVDPAPGCGYSVDGTTCADSPRCVARITG</sequence>
<name>CPFC_MYCSS</name>
<accession>Q1B968</accession>
<evidence type="ECO:0000255" key="1">
    <source>
        <dbReference type="HAMAP-Rule" id="MF_00323"/>
    </source>
</evidence>
<dbReference type="EC" id="4.99.1.9" evidence="1"/>
<dbReference type="EMBL" id="CP000384">
    <property type="protein sequence ID" value="ABG08566.1"/>
    <property type="molecule type" value="Genomic_DNA"/>
</dbReference>
<dbReference type="SMR" id="Q1B968"/>
<dbReference type="KEGG" id="mmc:Mmcs_2458"/>
<dbReference type="HOGENOM" id="CLU_018884_2_0_11"/>
<dbReference type="BioCyc" id="MSP164756:G1G6O-2509-MONOMER"/>
<dbReference type="UniPathway" id="UPA00252"/>
<dbReference type="GO" id="GO:0005737">
    <property type="term" value="C:cytoplasm"/>
    <property type="evidence" value="ECO:0007669"/>
    <property type="project" value="UniProtKB-SubCell"/>
</dbReference>
<dbReference type="GO" id="GO:0004325">
    <property type="term" value="F:ferrochelatase activity"/>
    <property type="evidence" value="ECO:0007669"/>
    <property type="project" value="UniProtKB-UniRule"/>
</dbReference>
<dbReference type="GO" id="GO:0046872">
    <property type="term" value="F:metal ion binding"/>
    <property type="evidence" value="ECO:0007669"/>
    <property type="project" value="UniProtKB-KW"/>
</dbReference>
<dbReference type="GO" id="GO:0006783">
    <property type="term" value="P:heme biosynthetic process"/>
    <property type="evidence" value="ECO:0007669"/>
    <property type="project" value="UniProtKB-UniRule"/>
</dbReference>
<dbReference type="CDD" id="cd00419">
    <property type="entry name" value="Ferrochelatase_C"/>
    <property type="match status" value="1"/>
</dbReference>
<dbReference type="CDD" id="cd03411">
    <property type="entry name" value="Ferrochelatase_N"/>
    <property type="match status" value="1"/>
</dbReference>
<dbReference type="Gene3D" id="3.40.50.1400">
    <property type="match status" value="2"/>
</dbReference>
<dbReference type="HAMAP" id="MF_00323">
    <property type="entry name" value="Ferrochelatase"/>
    <property type="match status" value="1"/>
</dbReference>
<dbReference type="InterPro" id="IPR001015">
    <property type="entry name" value="Ferrochelatase"/>
</dbReference>
<dbReference type="InterPro" id="IPR019772">
    <property type="entry name" value="Ferrochelatase_AS"/>
</dbReference>
<dbReference type="InterPro" id="IPR033644">
    <property type="entry name" value="Ferrochelatase_C"/>
</dbReference>
<dbReference type="InterPro" id="IPR033659">
    <property type="entry name" value="Ferrochelatase_N"/>
</dbReference>
<dbReference type="NCBIfam" id="TIGR00109">
    <property type="entry name" value="hemH"/>
    <property type="match status" value="1"/>
</dbReference>
<dbReference type="NCBIfam" id="NF000689">
    <property type="entry name" value="PRK00035.2-1"/>
    <property type="match status" value="1"/>
</dbReference>
<dbReference type="PANTHER" id="PTHR11108">
    <property type="entry name" value="FERROCHELATASE"/>
    <property type="match status" value="1"/>
</dbReference>
<dbReference type="PANTHER" id="PTHR11108:SF1">
    <property type="entry name" value="FERROCHELATASE, MITOCHONDRIAL"/>
    <property type="match status" value="1"/>
</dbReference>
<dbReference type="Pfam" id="PF00762">
    <property type="entry name" value="Ferrochelatase"/>
    <property type="match status" value="1"/>
</dbReference>
<dbReference type="SUPFAM" id="SSF53800">
    <property type="entry name" value="Chelatase"/>
    <property type="match status" value="1"/>
</dbReference>
<dbReference type="PROSITE" id="PS00534">
    <property type="entry name" value="FERROCHELATASE"/>
    <property type="match status" value="1"/>
</dbReference>
<keyword id="KW-0963">Cytoplasm</keyword>
<keyword id="KW-0350">Heme biosynthesis</keyword>
<keyword id="KW-0408">Iron</keyword>
<keyword id="KW-0456">Lyase</keyword>
<keyword id="KW-0479">Metal-binding</keyword>
<keyword id="KW-0627">Porphyrin biosynthesis</keyword>